<organism>
    <name type="scientific">Salmonella typhimurium (strain LT2 / SGSC1412 / ATCC 700720)</name>
    <dbReference type="NCBI Taxonomy" id="99287"/>
    <lineage>
        <taxon>Bacteria</taxon>
        <taxon>Pseudomonadati</taxon>
        <taxon>Pseudomonadota</taxon>
        <taxon>Gammaproteobacteria</taxon>
        <taxon>Enterobacterales</taxon>
        <taxon>Enterobacteriaceae</taxon>
        <taxon>Salmonella</taxon>
    </lineage>
</organism>
<accession>Q8ZL96</accession>
<name>SYGB_SALTY</name>
<dbReference type="EC" id="6.1.1.14" evidence="2"/>
<dbReference type="EMBL" id="AE006468">
    <property type="protein sequence ID" value="AAL22514.1"/>
    <property type="molecule type" value="Genomic_DNA"/>
</dbReference>
<dbReference type="RefSeq" id="NP_462555.1">
    <property type="nucleotide sequence ID" value="NC_003197.2"/>
</dbReference>
<dbReference type="RefSeq" id="WP_001291736.1">
    <property type="nucleotide sequence ID" value="NC_003197.2"/>
</dbReference>
<dbReference type="SMR" id="Q8ZL96"/>
<dbReference type="STRING" id="99287.STM3655"/>
<dbReference type="PaxDb" id="99287-STM3655"/>
<dbReference type="GeneID" id="1255179"/>
<dbReference type="KEGG" id="stm:STM3655"/>
<dbReference type="PATRIC" id="fig|99287.12.peg.3866"/>
<dbReference type="HOGENOM" id="CLU_007220_2_2_6"/>
<dbReference type="OMA" id="LPIPKRM"/>
<dbReference type="PhylomeDB" id="Q8ZL96"/>
<dbReference type="BioCyc" id="SENT99287:STM3655-MONOMER"/>
<dbReference type="Proteomes" id="UP000001014">
    <property type="component" value="Chromosome"/>
</dbReference>
<dbReference type="GO" id="GO:0005829">
    <property type="term" value="C:cytosol"/>
    <property type="evidence" value="ECO:0000318"/>
    <property type="project" value="GO_Central"/>
</dbReference>
<dbReference type="GO" id="GO:0004814">
    <property type="term" value="F:arginine-tRNA ligase activity"/>
    <property type="evidence" value="ECO:0007669"/>
    <property type="project" value="InterPro"/>
</dbReference>
<dbReference type="GO" id="GO:0005524">
    <property type="term" value="F:ATP binding"/>
    <property type="evidence" value="ECO:0007669"/>
    <property type="project" value="UniProtKB-UniRule"/>
</dbReference>
<dbReference type="GO" id="GO:0004820">
    <property type="term" value="F:glycine-tRNA ligase activity"/>
    <property type="evidence" value="ECO:0007669"/>
    <property type="project" value="UniProtKB-UniRule"/>
</dbReference>
<dbReference type="GO" id="GO:0006420">
    <property type="term" value="P:arginyl-tRNA aminoacylation"/>
    <property type="evidence" value="ECO:0007669"/>
    <property type="project" value="InterPro"/>
</dbReference>
<dbReference type="GO" id="GO:0006426">
    <property type="term" value="P:glycyl-tRNA aminoacylation"/>
    <property type="evidence" value="ECO:0007669"/>
    <property type="project" value="UniProtKB-UniRule"/>
</dbReference>
<dbReference type="HAMAP" id="MF_00255">
    <property type="entry name" value="Gly_tRNA_synth_beta"/>
    <property type="match status" value="1"/>
</dbReference>
<dbReference type="InterPro" id="IPR008909">
    <property type="entry name" value="DALR_anticod-bd"/>
</dbReference>
<dbReference type="InterPro" id="IPR015944">
    <property type="entry name" value="Gly-tRNA-synth_bsu"/>
</dbReference>
<dbReference type="InterPro" id="IPR006194">
    <property type="entry name" value="Gly-tRNA-synth_heterodimer"/>
</dbReference>
<dbReference type="NCBIfam" id="TIGR00211">
    <property type="entry name" value="glyS"/>
    <property type="match status" value="1"/>
</dbReference>
<dbReference type="PANTHER" id="PTHR30075:SF2">
    <property type="entry name" value="GLYCINE--TRNA LIGASE, CHLOROPLASTIC_MITOCHONDRIAL 2"/>
    <property type="match status" value="1"/>
</dbReference>
<dbReference type="PANTHER" id="PTHR30075">
    <property type="entry name" value="GLYCYL-TRNA SYNTHETASE"/>
    <property type="match status" value="1"/>
</dbReference>
<dbReference type="Pfam" id="PF05746">
    <property type="entry name" value="DALR_1"/>
    <property type="match status" value="1"/>
</dbReference>
<dbReference type="Pfam" id="PF02092">
    <property type="entry name" value="tRNA_synt_2f"/>
    <property type="match status" value="1"/>
</dbReference>
<dbReference type="PRINTS" id="PR01045">
    <property type="entry name" value="TRNASYNTHGB"/>
</dbReference>
<dbReference type="SUPFAM" id="SSF109604">
    <property type="entry name" value="HD-domain/PDEase-like"/>
    <property type="match status" value="1"/>
</dbReference>
<dbReference type="PROSITE" id="PS50861">
    <property type="entry name" value="AA_TRNA_LIGASE_II_GLYAB"/>
    <property type="match status" value="1"/>
</dbReference>
<protein>
    <recommendedName>
        <fullName evidence="2">Glycine--tRNA ligase beta subunit</fullName>
        <ecNumber evidence="2">6.1.1.14</ecNumber>
    </recommendedName>
    <alternativeName>
        <fullName evidence="2">Glycyl-tRNA synthetase beta subunit</fullName>
        <shortName evidence="2">GlyRS</shortName>
    </alternativeName>
</protein>
<feature type="initiator methionine" description="Removed" evidence="1">
    <location>
        <position position="1"/>
    </location>
</feature>
<feature type="chain" id="PRO_0000072926" description="Glycine--tRNA ligase beta subunit">
    <location>
        <begin position="2"/>
        <end position="689"/>
    </location>
</feature>
<keyword id="KW-0030">Aminoacyl-tRNA synthetase</keyword>
<keyword id="KW-0067">ATP-binding</keyword>
<keyword id="KW-0963">Cytoplasm</keyword>
<keyword id="KW-0436">Ligase</keyword>
<keyword id="KW-0547">Nucleotide-binding</keyword>
<keyword id="KW-0648">Protein biosynthesis</keyword>
<keyword id="KW-1185">Reference proteome</keyword>
<evidence type="ECO:0000250" key="1"/>
<evidence type="ECO:0000255" key="2">
    <source>
        <dbReference type="HAMAP-Rule" id="MF_00255"/>
    </source>
</evidence>
<reference key="1">
    <citation type="journal article" date="2001" name="Nature">
        <title>Complete genome sequence of Salmonella enterica serovar Typhimurium LT2.</title>
        <authorList>
            <person name="McClelland M."/>
            <person name="Sanderson K.E."/>
            <person name="Spieth J."/>
            <person name="Clifton S.W."/>
            <person name="Latreille P."/>
            <person name="Courtney L."/>
            <person name="Porwollik S."/>
            <person name="Ali J."/>
            <person name="Dante M."/>
            <person name="Du F."/>
            <person name="Hou S."/>
            <person name="Layman D."/>
            <person name="Leonard S."/>
            <person name="Nguyen C."/>
            <person name="Scott K."/>
            <person name="Holmes A."/>
            <person name="Grewal N."/>
            <person name="Mulvaney E."/>
            <person name="Ryan E."/>
            <person name="Sun H."/>
            <person name="Florea L."/>
            <person name="Miller W."/>
            <person name="Stoneking T."/>
            <person name="Nhan M."/>
            <person name="Waterston R."/>
            <person name="Wilson R.K."/>
        </authorList>
    </citation>
    <scope>NUCLEOTIDE SEQUENCE [LARGE SCALE GENOMIC DNA]</scope>
    <source>
        <strain>LT2 / SGSC1412 / ATCC 700720</strain>
    </source>
</reference>
<comment type="catalytic activity">
    <reaction evidence="2">
        <text>tRNA(Gly) + glycine + ATP = glycyl-tRNA(Gly) + AMP + diphosphate</text>
        <dbReference type="Rhea" id="RHEA:16013"/>
        <dbReference type="Rhea" id="RHEA-COMP:9664"/>
        <dbReference type="Rhea" id="RHEA-COMP:9683"/>
        <dbReference type="ChEBI" id="CHEBI:30616"/>
        <dbReference type="ChEBI" id="CHEBI:33019"/>
        <dbReference type="ChEBI" id="CHEBI:57305"/>
        <dbReference type="ChEBI" id="CHEBI:78442"/>
        <dbReference type="ChEBI" id="CHEBI:78522"/>
        <dbReference type="ChEBI" id="CHEBI:456215"/>
        <dbReference type="EC" id="6.1.1.14"/>
    </reaction>
</comment>
<comment type="subunit">
    <text evidence="2">Tetramer of two alpha and two beta subunits.</text>
</comment>
<comment type="subcellular location">
    <subcellularLocation>
        <location evidence="2">Cytoplasm</location>
    </subcellularLocation>
</comment>
<comment type="similarity">
    <text evidence="2">Belongs to the class-II aminoacyl-tRNA synthetase family.</text>
</comment>
<sequence>MSEKTFLVEIGTEELPPKALRSLAESFAANFTAELDNAGLAHGNVEWFAAPRRLALKVANLAESQPDREVEKRGPAIAQAFDAEGKPSKAAEGWARGCGITVDQAERLKTDKGEWLLYRAHVKGESTEALVPNMVATSLAKLPIPKLMRWGASDVHFVRPVHTVTLLLGDKVIPATILGIQSDRVIRGHRFMGEPEFTIDNADQYPQILLERGKVIADYEARKAKIKADAEEAARKIGGNADLSESLLEEVASLVEWPVVLTAKFEEKFLAVPAEALVYTMKGDQKYFPVYDNAGKLLPNFIFVANIESKDPTQIISGNEKVVRPRLADAEFFFNTDRKKRLEDHLPRLQTVLFQQQLGTLRDKTDRIQALAGWIAGQIGADVNHATRAGLLSKCDLMTNMVFEFTDTQGVMGMHYARHDGEAEDVAVALNEQYQPRFAGDDLPSNPVACALAIADKMDTLAGIFGIGQHPKGDKDPFALRRAALGVLRIIVEKNLALDLQTLTEEAVRLYGDKLTNANVVDDVIDFMLGRFRAWYQDEGYTVDTIQAVLARRPTRPADFDARMKAVSHFRTLEEASALAAANKRVSNILAKATEPLNDIVHASVLKEAAEIELARHLVVLRDKLQPYFADGRYQEALIELAALRAPVDEFFENVMVNAEEKDIRINRLTLLSKLRELFLQVADISLLQ</sequence>
<gene>
    <name evidence="2" type="primary">glyS</name>
    <name type="ordered locus">STM3655</name>
</gene>
<proteinExistence type="inferred from homology"/>